<evidence type="ECO:0000255" key="1">
    <source>
        <dbReference type="HAMAP-Rule" id="MF_01590"/>
    </source>
</evidence>
<keyword id="KW-1185">Reference proteome</keyword>
<keyword id="KW-0808">Transferase</keyword>
<keyword id="KW-0819">tRNA processing</keyword>
<dbReference type="EC" id="2.5.1.-" evidence="1"/>
<dbReference type="EMBL" id="CP000361">
    <property type="protein sequence ID" value="ABV67559.1"/>
    <property type="molecule type" value="Genomic_DNA"/>
</dbReference>
<dbReference type="RefSeq" id="WP_012012972.1">
    <property type="nucleotide sequence ID" value="NC_009850.1"/>
</dbReference>
<dbReference type="SMR" id="A8EUD5"/>
<dbReference type="STRING" id="367737.Abu_1302"/>
<dbReference type="GeneID" id="24304953"/>
<dbReference type="KEGG" id="abu:Abu_1302"/>
<dbReference type="eggNOG" id="COG0500">
    <property type="taxonomic scope" value="Bacteria"/>
</dbReference>
<dbReference type="HOGENOM" id="CLU_052665_1_0_7"/>
<dbReference type="Proteomes" id="UP000001136">
    <property type="component" value="Chromosome"/>
</dbReference>
<dbReference type="GO" id="GO:0016765">
    <property type="term" value="F:transferase activity, transferring alkyl or aryl (other than methyl) groups"/>
    <property type="evidence" value="ECO:0007669"/>
    <property type="project" value="InterPro"/>
</dbReference>
<dbReference type="GO" id="GO:0002098">
    <property type="term" value="P:tRNA wobble uridine modification"/>
    <property type="evidence" value="ECO:0007669"/>
    <property type="project" value="InterPro"/>
</dbReference>
<dbReference type="CDD" id="cd02440">
    <property type="entry name" value="AdoMet_MTases"/>
    <property type="match status" value="1"/>
</dbReference>
<dbReference type="Gene3D" id="3.40.50.150">
    <property type="entry name" value="Vaccinia Virus protein VP39"/>
    <property type="match status" value="1"/>
</dbReference>
<dbReference type="HAMAP" id="MF_01590">
    <property type="entry name" value="tRNA_carboxymethyltr_CmoB"/>
    <property type="match status" value="1"/>
</dbReference>
<dbReference type="InterPro" id="IPR010017">
    <property type="entry name" value="CmoB"/>
</dbReference>
<dbReference type="InterPro" id="IPR027555">
    <property type="entry name" value="Mo5U34_MeTrfas-like"/>
</dbReference>
<dbReference type="InterPro" id="IPR029063">
    <property type="entry name" value="SAM-dependent_MTases_sf"/>
</dbReference>
<dbReference type="NCBIfam" id="NF011650">
    <property type="entry name" value="PRK15068.1"/>
    <property type="match status" value="1"/>
</dbReference>
<dbReference type="NCBIfam" id="TIGR00452">
    <property type="entry name" value="tRNA 5-methoxyuridine(34)/uridine 5-oxyacetic acid(34) synthase CmoB"/>
    <property type="match status" value="1"/>
</dbReference>
<dbReference type="PANTHER" id="PTHR43861">
    <property type="entry name" value="TRANS-ACONITATE 2-METHYLTRANSFERASE-RELATED"/>
    <property type="match status" value="1"/>
</dbReference>
<dbReference type="Pfam" id="PF08003">
    <property type="entry name" value="Methyltransf_9"/>
    <property type="match status" value="1"/>
</dbReference>
<dbReference type="SUPFAM" id="SSF53335">
    <property type="entry name" value="S-adenosyl-L-methionine-dependent methyltransferases"/>
    <property type="match status" value="1"/>
</dbReference>
<gene>
    <name evidence="1" type="primary">cmoB</name>
    <name type="ordered locus">Abu_1302</name>
</gene>
<reference key="1">
    <citation type="journal article" date="2007" name="PLoS ONE">
        <title>The complete genome sequence and analysis of the Epsilonproteobacterium Arcobacter butzleri.</title>
        <authorList>
            <person name="Miller W.G."/>
            <person name="Parker C.T."/>
            <person name="Rubenfield M."/>
            <person name="Mendz G.L."/>
            <person name="Woesten M.M.S.M."/>
            <person name="Ussery D.W."/>
            <person name="Stolz J.F."/>
            <person name="Binnewies T.T."/>
            <person name="Hallin P.F."/>
            <person name="Wang G."/>
            <person name="Malek J.A."/>
            <person name="Rogosin A."/>
            <person name="Stanker L.H."/>
            <person name="Mandrell R.E."/>
        </authorList>
    </citation>
    <scope>NUCLEOTIDE SEQUENCE [LARGE SCALE GENOMIC DNA]</scope>
    <source>
        <strain>RM4018</strain>
    </source>
</reference>
<accession>A8EUD5</accession>
<comment type="function">
    <text evidence="1">Catalyzes carboxymethyl transfer from carboxy-S-adenosyl-L-methionine (Cx-SAM) to 5-hydroxyuridine (ho5U) to form 5-carboxymethoxyuridine (cmo5U) at position 34 in tRNAs.</text>
</comment>
<comment type="catalytic activity">
    <reaction evidence="1">
        <text>carboxy-S-adenosyl-L-methionine + 5-hydroxyuridine(34) in tRNA = 5-carboxymethoxyuridine(34) in tRNA + S-adenosyl-L-homocysteine + H(+)</text>
        <dbReference type="Rhea" id="RHEA:52848"/>
        <dbReference type="Rhea" id="RHEA-COMP:13381"/>
        <dbReference type="Rhea" id="RHEA-COMP:13383"/>
        <dbReference type="ChEBI" id="CHEBI:15378"/>
        <dbReference type="ChEBI" id="CHEBI:57856"/>
        <dbReference type="ChEBI" id="CHEBI:134278"/>
        <dbReference type="ChEBI" id="CHEBI:136877"/>
        <dbReference type="ChEBI" id="CHEBI:136879"/>
    </reaction>
</comment>
<comment type="subunit">
    <text evidence="1">Homotetramer.</text>
</comment>
<comment type="similarity">
    <text evidence="1">Belongs to the class I-like SAM-binding methyltransferase superfamily. CmoB family.</text>
</comment>
<feature type="chain" id="PRO_0000313902" description="tRNA U34 carboxymethyltransferase">
    <location>
        <begin position="1"/>
        <end position="304"/>
    </location>
</feature>
<feature type="binding site" evidence="1">
    <location>
        <position position="73"/>
    </location>
    <ligand>
        <name>carboxy-S-adenosyl-L-methionine</name>
        <dbReference type="ChEBI" id="CHEBI:134278"/>
    </ligand>
</feature>
<feature type="binding site" evidence="1">
    <location>
        <position position="87"/>
    </location>
    <ligand>
        <name>carboxy-S-adenosyl-L-methionine</name>
        <dbReference type="ChEBI" id="CHEBI:134278"/>
    </ligand>
</feature>
<feature type="binding site" evidence="1">
    <location>
        <position position="92"/>
    </location>
    <ligand>
        <name>carboxy-S-adenosyl-L-methionine</name>
        <dbReference type="ChEBI" id="CHEBI:134278"/>
    </ligand>
</feature>
<feature type="binding site" evidence="1">
    <location>
        <position position="111"/>
    </location>
    <ligand>
        <name>carboxy-S-adenosyl-L-methionine</name>
        <dbReference type="ChEBI" id="CHEBI:134278"/>
    </ligand>
</feature>
<feature type="binding site" evidence="1">
    <location>
        <begin position="133"/>
        <end position="135"/>
    </location>
    <ligand>
        <name>carboxy-S-adenosyl-L-methionine</name>
        <dbReference type="ChEBI" id="CHEBI:134278"/>
    </ligand>
</feature>
<feature type="binding site" evidence="1">
    <location>
        <begin position="160"/>
        <end position="161"/>
    </location>
    <ligand>
        <name>carboxy-S-adenosyl-L-methionine</name>
        <dbReference type="ChEBI" id="CHEBI:134278"/>
    </ligand>
</feature>
<feature type="binding site" evidence="1">
    <location>
        <position position="180"/>
    </location>
    <ligand>
        <name>carboxy-S-adenosyl-L-methionine</name>
        <dbReference type="ChEBI" id="CHEBI:134278"/>
    </ligand>
</feature>
<feature type="binding site" evidence="1">
    <location>
        <position position="295"/>
    </location>
    <ligand>
        <name>carboxy-S-adenosyl-L-methionine</name>
        <dbReference type="ChEBI" id="CHEBI:134278"/>
    </ligand>
</feature>
<protein>
    <recommendedName>
        <fullName evidence="1">tRNA U34 carboxymethyltransferase</fullName>
        <ecNumber evidence="1">2.5.1.-</ecNumber>
    </recommendedName>
</protein>
<sequence length="304" mass="35737">MNLEILQKKKEECRTWKNVEPWFLQLKEACKIEKSNLKIDYGDWFSIGNRADLGDEEYEIIVQTAKKLIPWRKGPFKIFDLEIDSEWQSNIKYNLIRPYFNLKDKVVADIGCNNGYYMFRMLEDCPKRLIGFDPSPLTLHQFEFVNHFVKSDIVYEMLGVEHLEFYNHKFDFIFMLGVLYHRPDPVGTLKSLARGLNSKGEILIDTFMIDGEEEICLTPNKRYSKIPNIYFIPTIPALKNWLERAGFENIEVLATTITTSQEQRKTPWSFDESLEDFLDPNDSSKTVEGYPAPKRVYVKARKIM</sequence>
<organism>
    <name type="scientific">Aliarcobacter butzleri (strain RM4018)</name>
    <name type="common">Arcobacter butzleri</name>
    <dbReference type="NCBI Taxonomy" id="367737"/>
    <lineage>
        <taxon>Bacteria</taxon>
        <taxon>Pseudomonadati</taxon>
        <taxon>Campylobacterota</taxon>
        <taxon>Epsilonproteobacteria</taxon>
        <taxon>Campylobacterales</taxon>
        <taxon>Arcobacteraceae</taxon>
        <taxon>Aliarcobacter</taxon>
    </lineage>
</organism>
<name>CMOB_ALIB4</name>
<proteinExistence type="inferred from homology"/>